<dbReference type="EMBL" id="S75174">
    <property type="protein sequence ID" value="AAB32597.1"/>
    <property type="molecule type" value="mRNA"/>
</dbReference>
<dbReference type="EMBL" id="X86096">
    <property type="protein sequence ID" value="CAA60050.2"/>
    <property type="molecule type" value="mRNA"/>
</dbReference>
<dbReference type="EMBL" id="U15641">
    <property type="protein sequence ID" value="AAC50119.1"/>
    <property type="molecule type" value="mRNA"/>
</dbReference>
<dbReference type="EMBL" id="AF250378">
    <property type="protein sequence ID" value="AAF65226.1"/>
    <property type="molecule type" value="Genomic_DNA"/>
</dbReference>
<dbReference type="EMBL" id="AB451292">
    <property type="protein sequence ID" value="BAG70106.1"/>
    <property type="molecule type" value="mRNA"/>
</dbReference>
<dbReference type="EMBL" id="AB451425">
    <property type="protein sequence ID" value="BAG70239.1"/>
    <property type="molecule type" value="mRNA"/>
</dbReference>
<dbReference type="EMBL" id="AF527540">
    <property type="protein sequence ID" value="AAM77918.1"/>
    <property type="molecule type" value="Genomic_DNA"/>
</dbReference>
<dbReference type="EMBL" id="AC040160">
    <property type="status" value="NOT_ANNOTATED_CDS"/>
    <property type="molecule type" value="Genomic_DNA"/>
</dbReference>
<dbReference type="EMBL" id="CH471092">
    <property type="protein sequence ID" value="EAW83094.1"/>
    <property type="molecule type" value="Genomic_DNA"/>
</dbReference>
<dbReference type="EMBL" id="BC033180">
    <property type="protein sequence ID" value="AAH33180.1"/>
    <property type="molecule type" value="mRNA"/>
</dbReference>
<dbReference type="CCDS" id="CCDS32464.1"/>
<dbReference type="PIR" id="A55237">
    <property type="entry name" value="A55237"/>
</dbReference>
<dbReference type="RefSeq" id="NP_001941.2">
    <property type="nucleotide sequence ID" value="NM_001950.3"/>
</dbReference>
<dbReference type="PDB" id="1CF7">
    <property type="method" value="X-ray"/>
    <property type="resolution" value="2.60 A"/>
    <property type="chains" value="A=11-86"/>
</dbReference>
<dbReference type="PDB" id="5TUU">
    <property type="method" value="X-ray"/>
    <property type="resolution" value="2.25 A"/>
    <property type="chains" value="B=91-198"/>
</dbReference>
<dbReference type="PDBsum" id="1CF7"/>
<dbReference type="PDBsum" id="5TUU"/>
<dbReference type="SMR" id="Q16254"/>
<dbReference type="BioGRID" id="108206">
    <property type="interactions" value="498"/>
</dbReference>
<dbReference type="ComplexPortal" id="CPX-2368">
    <property type="entry name" value="DREAM transcriptional repressor complex, RBL1 variant"/>
</dbReference>
<dbReference type="ComplexPortal" id="CPX-7461">
    <property type="entry name" value="DREAM transcriptional repressor complex, RBL2 variant"/>
</dbReference>
<dbReference type="ComplexPortal" id="CPX-7641">
    <property type="entry name" value="E2F4-DP1 transcriptional regulator complex"/>
</dbReference>
<dbReference type="CORUM" id="Q16254"/>
<dbReference type="DIP" id="DIP-24185N"/>
<dbReference type="ELM" id="Q16254"/>
<dbReference type="FunCoup" id="Q16254">
    <property type="interactions" value="4126"/>
</dbReference>
<dbReference type="IntAct" id="Q16254">
    <property type="interactions" value="40"/>
</dbReference>
<dbReference type="MINT" id="Q16254"/>
<dbReference type="STRING" id="9606.ENSP00000368686"/>
<dbReference type="ChEMBL" id="CHEMBL4630726"/>
<dbReference type="GlyGen" id="Q16254">
    <property type="glycosylation" value="2 sites, 1 O-linked glycan (1 site)"/>
</dbReference>
<dbReference type="iPTMnet" id="Q16254"/>
<dbReference type="PhosphoSitePlus" id="Q16254"/>
<dbReference type="BioMuta" id="E2F4"/>
<dbReference type="DMDM" id="2494229"/>
<dbReference type="jPOST" id="Q16254"/>
<dbReference type="MassIVE" id="Q16254"/>
<dbReference type="PaxDb" id="9606-ENSP00000368686"/>
<dbReference type="PeptideAtlas" id="Q16254"/>
<dbReference type="ProteomicsDB" id="60845"/>
<dbReference type="Pumba" id="Q16254"/>
<dbReference type="Antibodypedia" id="4294">
    <property type="antibodies" value="500 antibodies from 40 providers"/>
</dbReference>
<dbReference type="DNASU" id="1874"/>
<dbReference type="Ensembl" id="ENST00000379378.8">
    <property type="protein sequence ID" value="ENSP00000368686.3"/>
    <property type="gene ID" value="ENSG00000205250.9"/>
</dbReference>
<dbReference type="GeneID" id="1874"/>
<dbReference type="KEGG" id="hsa:1874"/>
<dbReference type="MANE-Select" id="ENST00000379378.8">
    <property type="protein sequence ID" value="ENSP00000368686.3"/>
    <property type="RefSeq nucleotide sequence ID" value="NM_001950.4"/>
    <property type="RefSeq protein sequence ID" value="NP_001941.2"/>
</dbReference>
<dbReference type="UCSC" id="uc002erz.4">
    <property type="organism name" value="human"/>
</dbReference>
<dbReference type="AGR" id="HGNC:3118"/>
<dbReference type="CTD" id="1874"/>
<dbReference type="DisGeNET" id="1874"/>
<dbReference type="GeneCards" id="E2F4"/>
<dbReference type="HGNC" id="HGNC:3118">
    <property type="gene designation" value="E2F4"/>
</dbReference>
<dbReference type="HPA" id="ENSG00000205250">
    <property type="expression patterns" value="Low tissue specificity"/>
</dbReference>
<dbReference type="MIM" id="600659">
    <property type="type" value="gene"/>
</dbReference>
<dbReference type="neXtProt" id="NX_Q16254"/>
<dbReference type="OpenTargets" id="ENSG00000205250"/>
<dbReference type="PharmGKB" id="PA27576"/>
<dbReference type="VEuPathDB" id="HostDB:ENSG00000205250"/>
<dbReference type="eggNOG" id="KOG2577">
    <property type="taxonomic scope" value="Eukaryota"/>
</dbReference>
<dbReference type="GeneTree" id="ENSGT00940000156252"/>
<dbReference type="HOGENOM" id="CLU_032091_2_2_1"/>
<dbReference type="InParanoid" id="Q16254"/>
<dbReference type="OMA" id="RECMNSG"/>
<dbReference type="OrthoDB" id="1743261at2759"/>
<dbReference type="PAN-GO" id="Q16254">
    <property type="GO annotations" value="4 GO annotations based on evolutionary models"/>
</dbReference>
<dbReference type="PhylomeDB" id="Q16254"/>
<dbReference type="TreeFam" id="TF105566"/>
<dbReference type="PathwayCommons" id="Q16254"/>
<dbReference type="Reactome" id="R-HSA-1362277">
    <property type="pathway name" value="Transcription of E2F targets under negative control by DREAM complex"/>
</dbReference>
<dbReference type="Reactome" id="R-HSA-1362300">
    <property type="pathway name" value="Transcription of E2F targets under negative control by p107 (RBL1) and p130 (RBL2) in complex with HDAC1"/>
</dbReference>
<dbReference type="Reactome" id="R-HSA-1538133">
    <property type="pathway name" value="G0 and Early G1"/>
</dbReference>
<dbReference type="Reactome" id="R-HSA-2173796">
    <property type="pathway name" value="SMAD2/SMAD3:SMAD4 heterotrimer regulates transcription"/>
</dbReference>
<dbReference type="Reactome" id="R-HSA-6804114">
    <property type="pathway name" value="TP53 Regulates Transcription of Genes Involved in G2 Cell Cycle Arrest"/>
</dbReference>
<dbReference type="Reactome" id="R-HSA-69202">
    <property type="pathway name" value="Cyclin E associated events during G1/S transition"/>
</dbReference>
<dbReference type="Reactome" id="R-HSA-69205">
    <property type="pathway name" value="G1/S-Specific Transcription"/>
</dbReference>
<dbReference type="Reactome" id="R-HSA-69231">
    <property type="pathway name" value="Cyclin D associated events in G1"/>
</dbReference>
<dbReference type="Reactome" id="R-HSA-69656">
    <property type="pathway name" value="Cyclin A:Cdk2-associated events at S phase entry"/>
</dbReference>
<dbReference type="SignaLink" id="Q16254"/>
<dbReference type="SIGNOR" id="Q16254"/>
<dbReference type="BioGRID-ORCS" id="1874">
    <property type="hits" value="31 hits in 1187 CRISPR screens"/>
</dbReference>
<dbReference type="ChiTaRS" id="E2F4">
    <property type="organism name" value="human"/>
</dbReference>
<dbReference type="EvolutionaryTrace" id="Q16254"/>
<dbReference type="GeneWiki" id="E2F4"/>
<dbReference type="GenomeRNAi" id="1874"/>
<dbReference type="Pharos" id="Q16254">
    <property type="development level" value="Tbio"/>
</dbReference>
<dbReference type="PRO" id="PR:Q16254"/>
<dbReference type="Proteomes" id="UP000005640">
    <property type="component" value="Chromosome 16"/>
</dbReference>
<dbReference type="RNAct" id="Q16254">
    <property type="molecule type" value="protein"/>
</dbReference>
<dbReference type="Bgee" id="ENSG00000205250">
    <property type="expression patterns" value="Expressed in pancreatic ductal cell and 108 other cell types or tissues"/>
</dbReference>
<dbReference type="ExpressionAtlas" id="Q16254">
    <property type="expression patterns" value="baseline and differential"/>
</dbReference>
<dbReference type="GO" id="GO:0000785">
    <property type="term" value="C:chromatin"/>
    <property type="evidence" value="ECO:0000314"/>
    <property type="project" value="BHF-UCL"/>
</dbReference>
<dbReference type="GO" id="GO:0005737">
    <property type="term" value="C:cytoplasm"/>
    <property type="evidence" value="ECO:0000314"/>
    <property type="project" value="UniProtKB"/>
</dbReference>
<dbReference type="GO" id="GO:0005654">
    <property type="term" value="C:nucleoplasm"/>
    <property type="evidence" value="ECO:0000314"/>
    <property type="project" value="HPA"/>
</dbReference>
<dbReference type="GO" id="GO:0090575">
    <property type="term" value="C:RNA polymerase II transcription regulator complex"/>
    <property type="evidence" value="ECO:0000318"/>
    <property type="project" value="GO_Central"/>
</dbReference>
<dbReference type="GO" id="GO:0003677">
    <property type="term" value="F:DNA binding"/>
    <property type="evidence" value="ECO:0000315"/>
    <property type="project" value="UniProtKB"/>
</dbReference>
<dbReference type="GO" id="GO:0001216">
    <property type="term" value="F:DNA-binding transcription activator activity"/>
    <property type="evidence" value="ECO:0000314"/>
    <property type="project" value="UniProtKB"/>
</dbReference>
<dbReference type="GO" id="GO:0001228">
    <property type="term" value="F:DNA-binding transcription activator activity, RNA polymerase II-specific"/>
    <property type="evidence" value="ECO:0000314"/>
    <property type="project" value="NTNU_SB"/>
</dbReference>
<dbReference type="GO" id="GO:0003700">
    <property type="term" value="F:DNA-binding transcription factor activity"/>
    <property type="evidence" value="ECO:0000314"/>
    <property type="project" value="UniProtKB"/>
</dbReference>
<dbReference type="GO" id="GO:0000981">
    <property type="term" value="F:DNA-binding transcription factor activity, RNA polymerase II-specific"/>
    <property type="evidence" value="ECO:0000247"/>
    <property type="project" value="NTNU_SB"/>
</dbReference>
<dbReference type="GO" id="GO:1990841">
    <property type="term" value="F:promoter-specific chromatin binding"/>
    <property type="evidence" value="ECO:0000314"/>
    <property type="project" value="MGI"/>
</dbReference>
<dbReference type="GO" id="GO:0046983">
    <property type="term" value="F:protein dimerization activity"/>
    <property type="evidence" value="ECO:0007669"/>
    <property type="project" value="InterPro"/>
</dbReference>
<dbReference type="GO" id="GO:0019904">
    <property type="term" value="F:protein domain specific binding"/>
    <property type="evidence" value="ECO:0000353"/>
    <property type="project" value="UniProtKB"/>
</dbReference>
<dbReference type="GO" id="GO:0000978">
    <property type="term" value="F:RNA polymerase II cis-regulatory region sequence-specific DNA binding"/>
    <property type="evidence" value="ECO:0000314"/>
    <property type="project" value="NTNU_SB"/>
</dbReference>
<dbReference type="GO" id="GO:1990837">
    <property type="term" value="F:sequence-specific double-stranded DNA binding"/>
    <property type="evidence" value="ECO:0000314"/>
    <property type="project" value="ARUK-UCL"/>
</dbReference>
<dbReference type="GO" id="GO:0009887">
    <property type="term" value="P:animal organ morphogenesis"/>
    <property type="evidence" value="ECO:0007669"/>
    <property type="project" value="Ensembl"/>
</dbReference>
<dbReference type="GO" id="GO:0008015">
    <property type="term" value="P:blood circulation"/>
    <property type="evidence" value="ECO:0007669"/>
    <property type="project" value="Ensembl"/>
</dbReference>
<dbReference type="GO" id="GO:0006884">
    <property type="term" value="P:cell volume homeostasis"/>
    <property type="evidence" value="ECO:0007669"/>
    <property type="project" value="Ensembl"/>
</dbReference>
<dbReference type="GO" id="GO:0098534">
    <property type="term" value="P:centriole assembly"/>
    <property type="evidence" value="ECO:0000250"/>
    <property type="project" value="UniProtKB"/>
</dbReference>
<dbReference type="GO" id="GO:0002064">
    <property type="term" value="P:epithelial cell development"/>
    <property type="evidence" value="ECO:0007669"/>
    <property type="project" value="Ensembl"/>
</dbReference>
<dbReference type="GO" id="GO:0044458">
    <property type="term" value="P:motile cilium assembly"/>
    <property type="evidence" value="ECO:0000250"/>
    <property type="project" value="UniProtKB"/>
</dbReference>
<dbReference type="GO" id="GO:1903251">
    <property type="term" value="P:multi-ciliated epithelial cell differentiation"/>
    <property type="evidence" value="ECO:0000250"/>
    <property type="project" value="UniProtKB"/>
</dbReference>
<dbReference type="GO" id="GO:0045944">
    <property type="term" value="P:positive regulation of transcription by RNA polymerase II"/>
    <property type="evidence" value="ECO:0000314"/>
    <property type="project" value="NTNU_SB"/>
</dbReference>
<dbReference type="GO" id="GO:0042127">
    <property type="term" value="P:regulation of cell population proliferation"/>
    <property type="evidence" value="ECO:0007669"/>
    <property type="project" value="Ensembl"/>
</dbReference>
<dbReference type="GO" id="GO:0006357">
    <property type="term" value="P:regulation of transcription by RNA polymerase II"/>
    <property type="evidence" value="ECO:0000318"/>
    <property type="project" value="GO_Central"/>
</dbReference>
<dbReference type="CDD" id="cd14660">
    <property type="entry name" value="E2F_DD"/>
    <property type="match status" value="1"/>
</dbReference>
<dbReference type="FunFam" id="1.10.10.10:FF:000008">
    <property type="entry name" value="E2F transcription factor 1"/>
    <property type="match status" value="1"/>
</dbReference>
<dbReference type="Gene3D" id="6.10.250.540">
    <property type="match status" value="1"/>
</dbReference>
<dbReference type="Gene3D" id="1.10.10.10">
    <property type="entry name" value="Winged helix-like DNA-binding domain superfamily/Winged helix DNA-binding domain"/>
    <property type="match status" value="1"/>
</dbReference>
<dbReference type="InterPro" id="IPR015633">
    <property type="entry name" value="E2F"/>
</dbReference>
<dbReference type="InterPro" id="IPR037241">
    <property type="entry name" value="E2F-DP_heterodim"/>
</dbReference>
<dbReference type="InterPro" id="IPR032198">
    <property type="entry name" value="E2F_CC-MB"/>
</dbReference>
<dbReference type="InterPro" id="IPR003316">
    <property type="entry name" value="E2F_WHTH_DNA-bd_dom"/>
</dbReference>
<dbReference type="InterPro" id="IPR036388">
    <property type="entry name" value="WH-like_DNA-bd_sf"/>
</dbReference>
<dbReference type="InterPro" id="IPR036390">
    <property type="entry name" value="WH_DNA-bd_sf"/>
</dbReference>
<dbReference type="PANTHER" id="PTHR12081">
    <property type="entry name" value="TRANSCRIPTION FACTOR E2F"/>
    <property type="match status" value="1"/>
</dbReference>
<dbReference type="PANTHER" id="PTHR12081:SF42">
    <property type="entry name" value="TRANSCRIPTION FACTOR E2F4"/>
    <property type="match status" value="1"/>
</dbReference>
<dbReference type="Pfam" id="PF16421">
    <property type="entry name" value="E2F_CC-MB"/>
    <property type="match status" value="1"/>
</dbReference>
<dbReference type="Pfam" id="PF02319">
    <property type="entry name" value="E2F_TDP"/>
    <property type="match status" value="1"/>
</dbReference>
<dbReference type="SMART" id="SM01372">
    <property type="entry name" value="E2F_TDP"/>
    <property type="match status" value="1"/>
</dbReference>
<dbReference type="SUPFAM" id="SSF144074">
    <property type="entry name" value="E2F-DP heterodimerization region"/>
    <property type="match status" value="1"/>
</dbReference>
<dbReference type="SUPFAM" id="SSF46785">
    <property type="entry name" value="Winged helix' DNA-binding domain"/>
    <property type="match status" value="1"/>
</dbReference>
<accession>Q16254</accession>
<accession>A6NGR8</accession>
<accession>B5BU56</accession>
<accession>Q12991</accession>
<accession>Q15328</accession>
<name>E2F4_HUMAN</name>
<organism>
    <name type="scientific">Homo sapiens</name>
    <name type="common">Human</name>
    <dbReference type="NCBI Taxonomy" id="9606"/>
    <lineage>
        <taxon>Eukaryota</taxon>
        <taxon>Metazoa</taxon>
        <taxon>Chordata</taxon>
        <taxon>Craniata</taxon>
        <taxon>Vertebrata</taxon>
        <taxon>Euteleostomi</taxon>
        <taxon>Mammalia</taxon>
        <taxon>Eutheria</taxon>
        <taxon>Euarchontoglires</taxon>
        <taxon>Primates</taxon>
        <taxon>Haplorrhini</taxon>
        <taxon>Catarrhini</taxon>
        <taxon>Hominidae</taxon>
        <taxon>Homo</taxon>
    </lineage>
</organism>
<keyword id="KW-0002">3D-structure</keyword>
<keyword id="KW-0007">Acetylation</keyword>
<keyword id="KW-0010">Activator</keyword>
<keyword id="KW-0131">Cell cycle</keyword>
<keyword id="KW-0970">Cilium biogenesis/degradation</keyword>
<keyword id="KW-0238">DNA-binding</keyword>
<keyword id="KW-0539">Nucleus</keyword>
<keyword id="KW-0597">Phosphoprotein</keyword>
<keyword id="KW-1267">Proteomics identification</keyword>
<keyword id="KW-1185">Reference proteome</keyword>
<keyword id="KW-0804">Transcription</keyword>
<keyword id="KW-0805">Transcription regulation</keyword>
<gene>
    <name type="primary">E2F4</name>
</gene>
<comment type="function">
    <text evidence="1 11 12">Transcription activator that binds DNA cooperatively with DP proteins through the E2 recognition site, 5'-TTTC[CG]CGC-3' found in the promoter region of a number of genes whose products are involved in cell cycle regulation or in DNA replication. The DRTF1/E2F complex functions in the control of cell-cycle progression from G1 to S phase. E2F4 binds with high affinity to RBL1 and RBL2. In some instances can also bind RB1. Specifically required for multiciliate cell differentiation: together with MCIDAS and E2F5, binds and activate genes required for centriole biogenesis.</text>
</comment>
<comment type="subunit">
    <text evidence="4 5 6 7 8 9 10 11 12 13">Component of the DRTF1/E2F transcription factor complex. Binds cooperatively with TFDP1/Dp-1 to E2F sites. The E2F4/TFDP1 dimer interacts preferentially with pocket protein RBL1, which inhibits the E2F transactivation domain. Lower affinity interaction has been found with retinoblastoma protein RB1. Interacts with TRRAP, which probably mediates its interaction with histone acetyltransferase complexes, leading to transcription activation. Interacts with HCFC1. Component of the DREAM complex (also named LINC complex) at least composed of E2F4, E2F5, LIN9, LIN37, LIN52, LIN54, MYBL1, MYBL2, RBL1, RBL2, RBBP4, TFDP1 and TFDP2. The complex exists in quiescent cells where it represses cell cycle-dependent genes. It dissociates in S phase when LIN9, LIN37, LIN52 and LIN54 form a subcomplex that binds to MYBL2. Interacts with PML (isoform PML-1, isoform PML-2, isoform PML-3, isoform PML-4 and isoform PML-5). Interacts with CEBPA (when phosphorylated) (PubMed:15107404).</text>
</comment>
<comment type="interaction">
    <interactant intactId="EBI-448943">
        <id>Q16254</id>
    </interactant>
    <interactant intactId="EBI-399080">
        <id>Q92993</id>
        <label>KAT5</label>
    </interactant>
    <organismsDiffer>false</organismsDiffer>
    <experiments>3</experiments>
</comment>
<comment type="interaction">
    <interactant intactId="EBI-448943">
        <id>Q16254</id>
    </interactant>
    <interactant intactId="EBI-1389424">
        <id>Q5TKA1</id>
        <label>LIN9</label>
    </interactant>
    <organismsDiffer>false</organismsDiffer>
    <experiments>4</experiments>
</comment>
<comment type="interaction">
    <interactant intactId="EBI-448943">
        <id>Q16254</id>
    </interactant>
    <interactant intactId="EBI-714158">
        <id>Q13526</id>
        <label>PIN1</label>
    </interactant>
    <organismsDiffer>false</organismsDiffer>
    <experiments>3</experiments>
</comment>
<comment type="interaction">
    <interactant intactId="EBI-448943">
        <id>Q16254</id>
    </interactant>
    <interactant intactId="EBI-491274">
        <id>P06400</id>
        <label>RB1</label>
    </interactant>
    <organismsDiffer>false</organismsDiffer>
    <experiments>6</experiments>
</comment>
<comment type="interaction">
    <interactant intactId="EBI-448943">
        <id>Q16254</id>
    </interactant>
    <interactant intactId="EBI-971439">
        <id>Q08999</id>
        <label>RBL2</label>
    </interactant>
    <organismsDiffer>false</organismsDiffer>
    <experiments>7</experiments>
</comment>
<comment type="interaction">
    <interactant intactId="EBI-448943">
        <id>Q16254</id>
    </interactant>
    <interactant intactId="EBI-749713">
        <id>Q14186</id>
        <label>TFDP1</label>
    </interactant>
    <organismsDiffer>false</organismsDiffer>
    <experiments>7</experiments>
</comment>
<comment type="interaction">
    <interactant intactId="EBI-448943">
        <id>Q16254</id>
    </interactant>
    <interactant intactId="EBI-12181237">
        <id>Q14188-5</id>
        <label>TFDP2</label>
    </interactant>
    <organismsDiffer>false</organismsDiffer>
    <experiments>3</experiments>
</comment>
<comment type="interaction">
    <interactant intactId="EBI-448943">
        <id>Q16254</id>
    </interactant>
    <interactant intactId="EBI-866453">
        <id>P03129</id>
        <label>E7</label>
    </interactant>
    <organismsDiffer>true</organismsDiffer>
    <experiments>2</experiments>
</comment>
<comment type="subcellular location">
    <subcellularLocation>
        <location>Nucleus</location>
    </subcellularLocation>
</comment>
<comment type="tissue specificity">
    <text>Found in all tissue examined including heart, brain, placenta, lung, liver, skeletal muscle, kidney and pancreas.</text>
</comment>
<comment type="developmental stage">
    <text>Present in the growth-arrested state, its abundance does not change significantly as cells move into and through the cell cycle.</text>
</comment>
<comment type="PTM">
    <text>Differentially phosphorylated in vivo.</text>
</comment>
<comment type="polymorphism">
    <text>The poly-Ser region of E2F4 is polymorphic and the number of Ser varies in the population (from 8 to 17). The variation might be associated with tumorigenesis.</text>
</comment>
<comment type="similarity">
    <text evidence="14">Belongs to the E2F/DP family.</text>
</comment>
<comment type="online information" name="Atlas of Genetics and Cytogenetics in Oncology and Haematology">
    <link uri="https://atlasgeneticsoncology.org/gene/40385/E2F4"/>
</comment>
<protein>
    <recommendedName>
        <fullName>Transcription factor E2F4</fullName>
        <shortName>E2F-4</shortName>
    </recommendedName>
</protein>
<proteinExistence type="evidence at protein level"/>
<sequence>MAEAGPQAPPPPGTPSRHEKSLGLLTTKFVSLLQEAKDGVLDLKLAADTLAVRQKRRIYDITNVLEGIGLIEKKSKNSIQWKGVGPGCNTREIADKLIELKAEIEELQQREQELDQHKVWVQQSIRNVTEDVQNSCLAYVTHEDICRCFAGDTLLAIRAPSGTSLEVPIPEGLNGQKKYQIHLKSVSGPIEVLLVNKEAWSSPPVAVPVPPPEDLLQSPSAVSTPPPLPKPALAQSQEASRPNSPQLTPTAVPGSAEVQGMAGPAAEITVSGGPGTDSKDSGELSSLPLGPTTLDTRPLQSSALLDSSSSSSSSSSSSSNSNSSSSSGPNPSTSFEPIKADPTGVLELPKELSEIFDPTRECMSSELLEELMSSEVFAPLLRLSPPPGDHDYIYNLDESEGVCDLFDVPVLNL</sequence>
<evidence type="ECO:0000250" key="1">
    <source>
        <dbReference type="UniProtKB" id="Q6DE14"/>
    </source>
</evidence>
<evidence type="ECO:0000255" key="2"/>
<evidence type="ECO:0000256" key="3">
    <source>
        <dbReference type="SAM" id="MobiDB-lite"/>
    </source>
</evidence>
<evidence type="ECO:0000269" key="4">
    <source>
    </source>
</evidence>
<evidence type="ECO:0000269" key="5">
    <source>
    </source>
</evidence>
<evidence type="ECO:0000269" key="6">
    <source>
    </source>
</evidence>
<evidence type="ECO:0000269" key="7">
    <source>
    </source>
</evidence>
<evidence type="ECO:0000269" key="8">
    <source>
    </source>
</evidence>
<evidence type="ECO:0000269" key="9">
    <source>
    </source>
</evidence>
<evidence type="ECO:0000269" key="10">
    <source>
    </source>
</evidence>
<evidence type="ECO:0000269" key="11">
    <source>
    </source>
</evidence>
<evidence type="ECO:0000269" key="12">
    <source>
    </source>
</evidence>
<evidence type="ECO:0000269" key="13">
    <source>
    </source>
</evidence>
<evidence type="ECO:0000305" key="14"/>
<evidence type="ECO:0007744" key="15">
    <source>
    </source>
</evidence>
<evidence type="ECO:0007744" key="16">
    <source>
    </source>
</evidence>
<evidence type="ECO:0007829" key="17">
    <source>
        <dbReference type="PDB" id="1CF7"/>
    </source>
</evidence>
<evidence type="ECO:0007829" key="18">
    <source>
        <dbReference type="PDB" id="5TUU"/>
    </source>
</evidence>
<reference key="1">
    <citation type="journal article" date="1994" name="Genes Dev.">
        <title>E2F-4, a new member of the E2F transcription factor family, interacts with p107.</title>
        <authorList>
            <person name="Ginsberg D."/>
            <person name="Vairo G."/>
            <person name="Chittenden T."/>
            <person name="Xiao Z.-X."/>
            <person name="Xu G."/>
            <person name="Wydner K.L."/>
            <person name="Decaprio J.A."/>
            <person name="Lawrence J.B."/>
            <person name="Livingston D.M."/>
        </authorList>
    </citation>
    <scope>NUCLEOTIDE SEQUENCE [MRNA]</scope>
    <scope>VARIANT SER-319 INS</scope>
    <scope>INTERACTION WITH RBL1</scope>
    <scope>FUNCTION</scope>
    <source>
        <tissue>Cervix carcinoma</tissue>
    </source>
</reference>
<reference key="2">
    <citation type="journal article" date="1994" name="Genes Dev.">
        <title>E2F-4, a new member of the E2F gene family, has oncogenic activity and associates with p107 in vivo.</title>
        <authorList>
            <person name="Beijersbergen R.L."/>
            <person name="Kerkhoven R.M."/>
            <person name="Zhu L."/>
            <person name="Carlee L."/>
            <person name="Voorhoeve P.M."/>
            <person name="Bernards R."/>
        </authorList>
    </citation>
    <scope>NUCLEOTIDE SEQUENCE [MRNA]</scope>
    <scope>INTERACTION WITH RBL1</scope>
    <scope>FUNCTION</scope>
    <source>
        <tissue>Colon carcinoma</tissue>
    </source>
</reference>
<reference key="3">
    <citation type="journal article" date="1995" name="Proc. Natl. Acad. Sci. U.S.A.">
        <title>E2F-4 and E2F-5, two members of the E2F family, are expressed in the early phases of the cell cycle.</title>
        <authorList>
            <person name="Sardet C."/>
            <person name="Vidal M."/>
            <person name="Cobrinik D."/>
            <person name="Geng Y."/>
            <person name="Onufryk C."/>
            <person name="Chen A."/>
            <person name="Weinberg R.A."/>
        </authorList>
    </citation>
    <scope>NUCLEOTIDE SEQUENCE [MRNA]</scope>
</reference>
<reference key="4">
    <citation type="journal article" date="2000" name="Int. J. Cancer">
        <title>Genomic structure and mutation screening of the E2F4 gene in human tumors.</title>
        <authorList>
            <person name="Schwemmle S."/>
            <person name="Pfeifer G.P."/>
        </authorList>
    </citation>
    <scope>NUCLEOTIDE SEQUENCE [GENOMIC DNA]</scope>
</reference>
<reference key="5">
    <citation type="journal article" date="2008" name="Nat. Methods">
        <title>Human protein factory for converting the transcriptome into an in vitro-expressed proteome.</title>
        <authorList>
            <person name="Goshima N."/>
            <person name="Kawamura Y."/>
            <person name="Fukumoto A."/>
            <person name="Miura A."/>
            <person name="Honma R."/>
            <person name="Satoh R."/>
            <person name="Wakamatsu A."/>
            <person name="Yamamoto J."/>
            <person name="Kimura K."/>
            <person name="Nishikawa T."/>
            <person name="Andoh T."/>
            <person name="Iida Y."/>
            <person name="Ishikawa K."/>
            <person name="Ito E."/>
            <person name="Kagawa N."/>
            <person name="Kaminaga C."/>
            <person name="Kanehori K."/>
            <person name="Kawakami B."/>
            <person name="Kenmochi K."/>
            <person name="Kimura R."/>
            <person name="Kobayashi M."/>
            <person name="Kuroita T."/>
            <person name="Kuwayama H."/>
            <person name="Maruyama Y."/>
            <person name="Matsuo K."/>
            <person name="Minami K."/>
            <person name="Mitsubori M."/>
            <person name="Mori M."/>
            <person name="Morishita R."/>
            <person name="Murase A."/>
            <person name="Nishikawa A."/>
            <person name="Nishikawa S."/>
            <person name="Okamoto T."/>
            <person name="Sakagami N."/>
            <person name="Sakamoto Y."/>
            <person name="Sasaki Y."/>
            <person name="Seki T."/>
            <person name="Sono S."/>
            <person name="Sugiyama A."/>
            <person name="Sumiya T."/>
            <person name="Takayama T."/>
            <person name="Takayama Y."/>
            <person name="Takeda H."/>
            <person name="Togashi T."/>
            <person name="Yahata K."/>
            <person name="Yamada H."/>
            <person name="Yanagisawa Y."/>
            <person name="Endo Y."/>
            <person name="Imamoto F."/>
            <person name="Kisu Y."/>
            <person name="Tanaka S."/>
            <person name="Isogai T."/>
            <person name="Imai J."/>
            <person name="Watanabe S."/>
            <person name="Nomura N."/>
        </authorList>
    </citation>
    <scope>NUCLEOTIDE SEQUENCE [LARGE SCALE MRNA]</scope>
</reference>
<reference key="6">
    <citation type="submission" date="2002-07" db="EMBL/GenBank/DDBJ databases">
        <authorList>
            <consortium name="NIEHS SNPs program"/>
        </authorList>
    </citation>
    <scope>NUCLEOTIDE SEQUENCE [GENOMIC DNA]</scope>
</reference>
<reference key="7">
    <citation type="journal article" date="2004" name="Nature">
        <title>The sequence and analysis of duplication-rich human chromosome 16.</title>
        <authorList>
            <person name="Martin J."/>
            <person name="Han C."/>
            <person name="Gordon L.A."/>
            <person name="Terry A."/>
            <person name="Prabhakar S."/>
            <person name="She X."/>
            <person name="Xie G."/>
            <person name="Hellsten U."/>
            <person name="Chan Y.M."/>
            <person name="Altherr M."/>
            <person name="Couronne O."/>
            <person name="Aerts A."/>
            <person name="Bajorek E."/>
            <person name="Black S."/>
            <person name="Blumer H."/>
            <person name="Branscomb E."/>
            <person name="Brown N.C."/>
            <person name="Bruno W.J."/>
            <person name="Buckingham J.M."/>
            <person name="Callen D.F."/>
            <person name="Campbell C.S."/>
            <person name="Campbell M.L."/>
            <person name="Campbell E.W."/>
            <person name="Caoile C."/>
            <person name="Challacombe J.F."/>
            <person name="Chasteen L.A."/>
            <person name="Chertkov O."/>
            <person name="Chi H.C."/>
            <person name="Christensen M."/>
            <person name="Clark L.M."/>
            <person name="Cohn J.D."/>
            <person name="Denys M."/>
            <person name="Detter J.C."/>
            <person name="Dickson M."/>
            <person name="Dimitrijevic-Bussod M."/>
            <person name="Escobar J."/>
            <person name="Fawcett J.J."/>
            <person name="Flowers D."/>
            <person name="Fotopulos D."/>
            <person name="Glavina T."/>
            <person name="Gomez M."/>
            <person name="Gonzales E."/>
            <person name="Goodstein D."/>
            <person name="Goodwin L.A."/>
            <person name="Grady D.L."/>
            <person name="Grigoriev I."/>
            <person name="Groza M."/>
            <person name="Hammon N."/>
            <person name="Hawkins T."/>
            <person name="Haydu L."/>
            <person name="Hildebrand C.E."/>
            <person name="Huang W."/>
            <person name="Israni S."/>
            <person name="Jett J."/>
            <person name="Jewett P.B."/>
            <person name="Kadner K."/>
            <person name="Kimball H."/>
            <person name="Kobayashi A."/>
            <person name="Krawczyk M.-C."/>
            <person name="Leyba T."/>
            <person name="Longmire J.L."/>
            <person name="Lopez F."/>
            <person name="Lou Y."/>
            <person name="Lowry S."/>
            <person name="Ludeman T."/>
            <person name="Manohar C.F."/>
            <person name="Mark G.A."/>
            <person name="McMurray K.L."/>
            <person name="Meincke L.J."/>
            <person name="Morgan J."/>
            <person name="Moyzis R.K."/>
            <person name="Mundt M.O."/>
            <person name="Munk A.C."/>
            <person name="Nandkeshwar R.D."/>
            <person name="Pitluck S."/>
            <person name="Pollard M."/>
            <person name="Predki P."/>
            <person name="Parson-Quintana B."/>
            <person name="Ramirez L."/>
            <person name="Rash S."/>
            <person name="Retterer J."/>
            <person name="Ricke D.O."/>
            <person name="Robinson D.L."/>
            <person name="Rodriguez A."/>
            <person name="Salamov A."/>
            <person name="Saunders E.H."/>
            <person name="Scott D."/>
            <person name="Shough T."/>
            <person name="Stallings R.L."/>
            <person name="Stalvey M."/>
            <person name="Sutherland R.D."/>
            <person name="Tapia R."/>
            <person name="Tesmer J.G."/>
            <person name="Thayer N."/>
            <person name="Thompson L.S."/>
            <person name="Tice H."/>
            <person name="Torney D.C."/>
            <person name="Tran-Gyamfi M."/>
            <person name="Tsai M."/>
            <person name="Ulanovsky L.E."/>
            <person name="Ustaszewska A."/>
            <person name="Vo N."/>
            <person name="White P.S."/>
            <person name="Williams A.L."/>
            <person name="Wills P.L."/>
            <person name="Wu J.-R."/>
            <person name="Wu K."/>
            <person name="Yang J."/>
            <person name="DeJong P."/>
            <person name="Bruce D."/>
            <person name="Doggett N.A."/>
            <person name="Deaven L."/>
            <person name="Schmutz J."/>
            <person name="Grimwood J."/>
            <person name="Richardson P."/>
            <person name="Rokhsar D.S."/>
            <person name="Eichler E.E."/>
            <person name="Gilna P."/>
            <person name="Lucas S.M."/>
            <person name="Myers R.M."/>
            <person name="Rubin E.M."/>
            <person name="Pennacchio L.A."/>
        </authorList>
    </citation>
    <scope>NUCLEOTIDE SEQUENCE [LARGE SCALE GENOMIC DNA]</scope>
</reference>
<reference key="8">
    <citation type="submission" date="2005-07" db="EMBL/GenBank/DDBJ databases">
        <authorList>
            <person name="Mural R.J."/>
            <person name="Istrail S."/>
            <person name="Sutton G.G."/>
            <person name="Florea L."/>
            <person name="Halpern A.L."/>
            <person name="Mobarry C.M."/>
            <person name="Lippert R."/>
            <person name="Walenz B."/>
            <person name="Shatkay H."/>
            <person name="Dew I."/>
            <person name="Miller J.R."/>
            <person name="Flanigan M.J."/>
            <person name="Edwards N.J."/>
            <person name="Bolanos R."/>
            <person name="Fasulo D."/>
            <person name="Halldorsson B.V."/>
            <person name="Hannenhalli S."/>
            <person name="Turner R."/>
            <person name="Yooseph S."/>
            <person name="Lu F."/>
            <person name="Nusskern D.R."/>
            <person name="Shue B.C."/>
            <person name="Zheng X.H."/>
            <person name="Zhong F."/>
            <person name="Delcher A.L."/>
            <person name="Huson D.H."/>
            <person name="Kravitz S.A."/>
            <person name="Mouchard L."/>
            <person name="Reinert K."/>
            <person name="Remington K.A."/>
            <person name="Clark A.G."/>
            <person name="Waterman M.S."/>
            <person name="Eichler E.E."/>
            <person name="Adams M.D."/>
            <person name="Hunkapiller M.W."/>
            <person name="Myers E.W."/>
            <person name="Venter J.C."/>
        </authorList>
    </citation>
    <scope>NUCLEOTIDE SEQUENCE [LARGE SCALE GENOMIC DNA]</scope>
</reference>
<reference key="9">
    <citation type="journal article" date="2004" name="Genome Res.">
        <title>The status, quality, and expansion of the NIH full-length cDNA project: the Mammalian Gene Collection (MGC).</title>
        <authorList>
            <consortium name="The MGC Project Team"/>
        </authorList>
    </citation>
    <scope>NUCLEOTIDE SEQUENCE [LARGE SCALE MRNA]</scope>
    <source>
        <tissue>Kidney</tissue>
    </source>
</reference>
<reference key="10">
    <citation type="journal article" date="1997" name="Br. J. Haematol.">
        <title>The predominant E2F complex in human primary haemopoietic cells and in AML blasts contains E2F-4, DP-1 and p130.</title>
        <authorList>
            <person name="Williams C.D."/>
            <person name="Linch D.C."/>
            <person name="Soerensen T.S."/>
            <person name="La Thangue N.B."/>
            <person name="Thomas N.S.B."/>
        </authorList>
    </citation>
    <scope>INTERACTION WITH RBL2</scope>
</reference>
<reference key="11">
    <citation type="journal article" date="2001" name="J. Biol. Chem.">
        <title>E2F transcriptional activation requires TRRAP and GCN5 cofactors.</title>
        <authorList>
            <person name="Lang S.E."/>
            <person name="McMahon S.B."/>
            <person name="Cole M.D."/>
            <person name="Hearing P."/>
        </authorList>
    </citation>
    <scope>INTERACTION WITH TRRAP</scope>
</reference>
<reference key="12">
    <citation type="journal article" date="2003" name="J. Biol. Chem.">
        <title>HCF-1 functions as a coactivator for the zinc finger protein Krox20.</title>
        <authorList>
            <person name="Luciano R.L."/>
            <person name="Wilson A.C."/>
        </authorList>
    </citation>
    <scope>INTERACTION WITH HCFC1</scope>
</reference>
<reference key="13">
    <citation type="journal article" date="2004" name="Genes Dev.">
        <title>Liver tumors escape negative control of proliferation via PI3K/Akt-mediated block of C/EBP alpha growth inhibitory activity.</title>
        <authorList>
            <person name="Wang G.L."/>
            <person name="Iakova P."/>
            <person name="Wilde M."/>
            <person name="Awad S."/>
            <person name="Timchenko N.A."/>
        </authorList>
    </citation>
    <scope>INTERACTION WITH CEBPA</scope>
</reference>
<reference key="14">
    <citation type="journal article" date="2005" name="Cell">
        <title>Structure of the Rb C-terminal domain bound to E2F1-DP1: a mechanism for phosphorylation-induced E2F release.</title>
        <authorList>
            <person name="Rubin S.M."/>
            <person name="Gall A.-L."/>
            <person name="Zheng N."/>
            <person name="Pavletich N.P."/>
        </authorList>
    </citation>
    <scope>INTERACTION WITH RB1; RBL1; TFDP1 AND TFDP2</scope>
</reference>
<reference key="15">
    <citation type="journal article" date="2007" name="Cell Cycle">
        <title>LINC, a human complex that is related to pRB-containing complexes in invertebrates regulates the expression of G2/M genes.</title>
        <authorList>
            <person name="Schmit F."/>
            <person name="Korenjak M."/>
            <person name="Mannefeld M."/>
            <person name="Schmitt K."/>
            <person name="Franke C."/>
            <person name="von Eyss B."/>
            <person name="Gagrica S."/>
            <person name="Haenel F."/>
            <person name="Brehm A."/>
            <person name="Gaubatz S."/>
        </authorList>
    </citation>
    <scope>IDENTIFICATION IN THE DREAM COMPLEX</scope>
</reference>
<reference key="16">
    <citation type="journal article" date="2007" name="Mol. Cell">
        <title>Evolutionarily conserved multisubunit RBL2/p130 and E2F4 protein complex represses human cell cycle-dependent genes in quiescence.</title>
        <authorList>
            <person name="Litovchick L."/>
            <person name="Sadasivam S."/>
            <person name="Florens L."/>
            <person name="Zhu X."/>
            <person name="Swanson S.K."/>
            <person name="Velmurugan S."/>
            <person name="Chen R."/>
            <person name="Washburn M.P."/>
            <person name="Liu X.S."/>
            <person name="DeCaprio J.A."/>
        </authorList>
    </citation>
    <scope>IDENTIFICATION IN THE DREAM COMPLEX</scope>
</reference>
<reference key="17">
    <citation type="journal article" date="2009" name="Anal. Chem.">
        <title>Lys-N and trypsin cover complementary parts of the phosphoproteome in a refined SCX-based approach.</title>
        <authorList>
            <person name="Gauci S."/>
            <person name="Helbig A.O."/>
            <person name="Slijper M."/>
            <person name="Krijgsveld J."/>
            <person name="Heck A.J."/>
            <person name="Mohammed S."/>
        </authorList>
    </citation>
    <scope>ACETYLATION [LARGE SCALE ANALYSIS] AT ALA-2</scope>
    <scope>CLEAVAGE OF INITIATOR METHIONINE [LARGE SCALE ANALYSIS]</scope>
    <scope>IDENTIFICATION BY MASS SPECTROMETRY [LARGE SCALE ANALYSIS]</scope>
</reference>
<reference key="18">
    <citation type="journal article" date="2012" name="EMBO J.">
        <title>Physical and functional interaction between PML and TBX2 in the establishment of cellular senescence.</title>
        <authorList>
            <person name="Martin N."/>
            <person name="Benhamed M."/>
            <person name="Nacerddine K."/>
            <person name="Demarque M.D."/>
            <person name="van Lohuizen M."/>
            <person name="Dejean A."/>
            <person name="Bischof O."/>
        </authorList>
    </citation>
    <scope>INTERACTION WITH PML</scope>
</reference>
<reference key="19">
    <citation type="journal article" date="2013" name="J. Proteome Res.">
        <title>Toward a comprehensive characterization of a human cancer cell phosphoproteome.</title>
        <authorList>
            <person name="Zhou H."/>
            <person name="Di Palma S."/>
            <person name="Preisinger C."/>
            <person name="Peng M."/>
            <person name="Polat A.N."/>
            <person name="Heck A.J."/>
            <person name="Mohammed S."/>
        </authorList>
    </citation>
    <scope>IDENTIFICATION BY MASS SPECTROMETRY [LARGE SCALE ANALYSIS]</scope>
    <source>
        <tissue>Erythroleukemia</tissue>
    </source>
</reference>
<reference key="20">
    <citation type="journal article" date="2014" name="J. Proteomics">
        <title>An enzyme assisted RP-RPLC approach for in-depth analysis of human liver phosphoproteome.</title>
        <authorList>
            <person name="Bian Y."/>
            <person name="Song C."/>
            <person name="Cheng K."/>
            <person name="Dong M."/>
            <person name="Wang F."/>
            <person name="Huang J."/>
            <person name="Sun D."/>
            <person name="Wang L."/>
            <person name="Ye M."/>
            <person name="Zou H."/>
        </authorList>
    </citation>
    <scope>PHOSPHORYLATION [LARGE SCALE ANALYSIS] AT SER-384</scope>
    <scope>IDENTIFICATION BY MASS SPECTROMETRY [LARGE SCALE ANALYSIS]</scope>
    <source>
        <tissue>Liver</tissue>
    </source>
</reference>
<reference key="21">
    <citation type="journal article" date="1999" name="Genes Dev.">
        <title>Structural basis of DNA recognition by the heterodimeric cell cycle transcription factor E2F-DP.</title>
        <authorList>
            <person name="Zheng N."/>
            <person name="Fraenkel E."/>
            <person name="Pabo C.O."/>
            <person name="Pavletich N.P."/>
        </authorList>
    </citation>
    <scope>X-RAY CRYSTALLOGRAPHY (2.6 ANGSTROMS) OF 11-86</scope>
</reference>
<reference key="22">
    <citation type="journal article" date="2000" name="Hum. Mutat.">
        <title>Various AGC repeat numbers in the coding region of the human transcription factor gene E2F-4.</title>
        <authorList>
            <person name="Zhong X."/>
            <person name="Hemmi H."/>
            <person name="Koike J."/>
            <person name="Tsujita K."/>
            <person name="Shimatake H."/>
        </authorList>
    </citation>
    <scope>POLYMORPHISM</scope>
</reference>
<feature type="initiator methionine" description="Removed" evidence="15">
    <location>
        <position position="1"/>
    </location>
</feature>
<feature type="chain" id="PRO_0000219468" description="Transcription factor E2F4">
    <location>
        <begin position="2"/>
        <end position="413"/>
    </location>
</feature>
<feature type="DNA-binding region" evidence="2">
    <location>
        <begin position="16"/>
        <end position="85"/>
    </location>
</feature>
<feature type="region of interest" description="Disordered" evidence="3">
    <location>
        <begin position="1"/>
        <end position="20"/>
    </location>
</feature>
<feature type="region of interest" description="Leucine-zipper">
    <location>
        <begin position="43"/>
        <end position="65"/>
    </location>
</feature>
<feature type="region of interest" description="Dimerization" evidence="2">
    <location>
        <begin position="86"/>
        <end position="181"/>
    </location>
</feature>
<feature type="region of interest" description="Disordered" evidence="3">
    <location>
        <begin position="211"/>
        <end position="340"/>
    </location>
</feature>
<feature type="region of interest" description="Transactivation" evidence="2">
    <location>
        <begin position="337"/>
        <end position="413"/>
    </location>
</feature>
<feature type="region of interest" description="Interaction with RBL1 and RBL2" evidence="2">
    <location>
        <begin position="390"/>
        <end position="407"/>
    </location>
</feature>
<feature type="short sequence motif" description="DEF box">
    <location>
        <begin position="48"/>
        <end position="85"/>
    </location>
</feature>
<feature type="short sequence motif" description="HCFC1-binding-motif (HBM)">
    <location>
        <begin position="389"/>
        <end position="392"/>
    </location>
</feature>
<feature type="compositionally biased region" description="Polar residues" evidence="3">
    <location>
        <begin position="234"/>
        <end position="249"/>
    </location>
</feature>
<feature type="compositionally biased region" description="Polar residues" evidence="3">
    <location>
        <begin position="293"/>
        <end position="306"/>
    </location>
</feature>
<feature type="compositionally biased region" description="Low complexity" evidence="3">
    <location>
        <begin position="307"/>
        <end position="327"/>
    </location>
</feature>
<feature type="modified residue" description="N-acetylalanine" evidence="15">
    <location>
        <position position="2"/>
    </location>
</feature>
<feature type="modified residue" description="Phosphoserine" evidence="16">
    <location>
        <position position="384"/>
    </location>
</feature>
<feature type="sequence variant" id="VAR_014936" description="In dbSNP:rs1801013.">
    <original>T</original>
    <variation>P</variation>
    <location>
        <position position="293"/>
    </location>
</feature>
<feature type="sequence variant" id="VAR_014024">
    <original>S</original>
    <variation>SSSS</variation>
    <location>
        <position position="319"/>
    </location>
</feature>
<feature type="turn" evidence="17">
    <location>
        <begin position="17"/>
        <end position="20"/>
    </location>
</feature>
<feature type="helix" evidence="17">
    <location>
        <begin position="22"/>
        <end position="35"/>
    </location>
</feature>
<feature type="strand" evidence="17">
    <location>
        <begin position="40"/>
        <end position="42"/>
    </location>
</feature>
<feature type="helix" evidence="17">
    <location>
        <begin position="43"/>
        <end position="49"/>
    </location>
</feature>
<feature type="turn" evidence="17">
    <location>
        <begin position="50"/>
        <end position="52"/>
    </location>
</feature>
<feature type="helix" evidence="17">
    <location>
        <begin position="56"/>
        <end position="68"/>
    </location>
</feature>
<feature type="strand" evidence="17">
    <location>
        <begin position="70"/>
        <end position="75"/>
    </location>
</feature>
<feature type="strand" evidence="17">
    <location>
        <begin position="78"/>
        <end position="81"/>
    </location>
</feature>
<feature type="helix" evidence="18">
    <location>
        <begin position="96"/>
        <end position="129"/>
    </location>
</feature>
<feature type="helix" evidence="18">
    <location>
        <begin position="132"/>
        <end position="134"/>
    </location>
</feature>
<feature type="strand" evidence="18">
    <location>
        <begin position="139"/>
        <end position="141"/>
    </location>
</feature>
<feature type="helix" evidence="18">
    <location>
        <begin position="142"/>
        <end position="148"/>
    </location>
</feature>
<feature type="turn" evidence="18">
    <location>
        <begin position="149"/>
        <end position="151"/>
    </location>
</feature>
<feature type="strand" evidence="18">
    <location>
        <begin position="152"/>
        <end position="158"/>
    </location>
</feature>
<feature type="strand" evidence="18">
    <location>
        <begin position="164"/>
        <end position="166"/>
    </location>
</feature>
<feature type="strand" evidence="18">
    <location>
        <begin position="179"/>
        <end position="184"/>
    </location>
</feature>
<feature type="strand" evidence="18">
    <location>
        <begin position="186"/>
        <end position="188"/>
    </location>
</feature>
<feature type="strand" evidence="18">
    <location>
        <begin position="191"/>
        <end position="194"/>
    </location>
</feature>